<organism>
    <name type="scientific">Brucella abortus (strain S19)</name>
    <dbReference type="NCBI Taxonomy" id="430066"/>
    <lineage>
        <taxon>Bacteria</taxon>
        <taxon>Pseudomonadati</taxon>
        <taxon>Pseudomonadota</taxon>
        <taxon>Alphaproteobacteria</taxon>
        <taxon>Hyphomicrobiales</taxon>
        <taxon>Brucellaceae</taxon>
        <taxon>Brucella/Ochrobactrum group</taxon>
        <taxon>Brucella</taxon>
    </lineage>
</organism>
<proteinExistence type="inferred from homology"/>
<dbReference type="EMBL" id="CP000887">
    <property type="protein sequence ID" value="ACD71876.1"/>
    <property type="molecule type" value="Genomic_DNA"/>
</dbReference>
<dbReference type="RefSeq" id="WP_002966688.1">
    <property type="nucleotide sequence ID" value="NC_010742.1"/>
</dbReference>
<dbReference type="SMR" id="B2S9I5"/>
<dbReference type="KEGG" id="bmc:BAbS19_I03350"/>
<dbReference type="HOGENOM" id="CLU_036729_2_0_5"/>
<dbReference type="Proteomes" id="UP000002565">
    <property type="component" value="Chromosome 1"/>
</dbReference>
<dbReference type="GO" id="GO:0047580">
    <property type="term" value="F:4-hydroxyproline epimerase activity"/>
    <property type="evidence" value="ECO:0007669"/>
    <property type="project" value="TreeGrafter"/>
</dbReference>
<dbReference type="GO" id="GO:0050346">
    <property type="term" value="F:trans-L-3-hydroxyproline dehydratase activity"/>
    <property type="evidence" value="ECO:0007669"/>
    <property type="project" value="UniProtKB-ARBA"/>
</dbReference>
<dbReference type="FunFam" id="3.10.310.10:FF:000010">
    <property type="entry name" value="Proline racemase"/>
    <property type="match status" value="1"/>
</dbReference>
<dbReference type="Gene3D" id="3.10.310.10">
    <property type="entry name" value="Diaminopimelate Epimerase, Chain A, domain 1"/>
    <property type="match status" value="2"/>
</dbReference>
<dbReference type="InterPro" id="IPR008794">
    <property type="entry name" value="Pro_racemase_fam"/>
</dbReference>
<dbReference type="NCBIfam" id="NF047722">
    <property type="entry name" value="T3LHypDht"/>
    <property type="match status" value="1"/>
</dbReference>
<dbReference type="PANTHER" id="PTHR33442:SF5">
    <property type="entry name" value="BIFUNCTIONAL TRANS-3-HYDROXY-L-PROLINE DEHYDRATASE_2-EPIMERASE"/>
    <property type="match status" value="1"/>
</dbReference>
<dbReference type="PANTHER" id="PTHR33442">
    <property type="entry name" value="TRANS-3-HYDROXY-L-PROLINE DEHYDRATASE"/>
    <property type="match status" value="1"/>
</dbReference>
<dbReference type="Pfam" id="PF05544">
    <property type="entry name" value="Pro_racemase"/>
    <property type="match status" value="1"/>
</dbReference>
<dbReference type="PIRSF" id="PIRSF029792">
    <property type="entry name" value="Pro_racemase"/>
    <property type="match status" value="1"/>
</dbReference>
<dbReference type="SFLD" id="SFLDS00028">
    <property type="entry name" value="Proline_Racemase"/>
    <property type="match status" value="1"/>
</dbReference>
<dbReference type="SUPFAM" id="SSF54506">
    <property type="entry name" value="Diaminopimelate epimerase-like"/>
    <property type="match status" value="1"/>
</dbReference>
<feature type="chain" id="PRO_0000354038" description="Uncharacterized protein BAbS19_I03350">
    <location>
        <begin position="1"/>
        <end position="342"/>
    </location>
</feature>
<sequence>MRSTKVIHIVGCHAEGEVGDVIVGGVAPPPGETVWEQSRFIANDETLRNFVLNEPRGGVFRHVNLLVPPKDPRAQMGFIIMEPADTPPMSGSNSICVSTVLLDSGIIAMQEPVTHMVLEAPGGIIEVEAECRNGKAERISVRNVPSFADRLDAPLDVTGLGTIMVDTAYGGDSFVIVDAAQIGMKIEPGQARELAEIGVKITKAANEQLGFRHPERDWRHISFCQITEPVTREGDVLTGVNTVAIRPAKLDRSPTGTGCSARMAVLHAKGQMKAGERFIGKSVLGTEFHCRLDKVLELGGKPAISPIISGRAWVTGTSQLMLDPSDPFPHGYRLSDTWPRDE</sequence>
<protein>
    <recommendedName>
        <fullName>Uncharacterized protein BAbS19_I03350</fullName>
    </recommendedName>
</protein>
<gene>
    <name type="ordered locus">BAbS19_I03350</name>
</gene>
<comment type="similarity">
    <text evidence="1">Belongs to the proline racemase family.</text>
</comment>
<evidence type="ECO:0000305" key="1"/>
<reference key="1">
    <citation type="journal article" date="2008" name="PLoS ONE">
        <title>Genome sequence of Brucella abortus vaccine strain S19 compared to virulent strains yields candidate virulence genes.</title>
        <authorList>
            <person name="Crasta O.R."/>
            <person name="Folkerts O."/>
            <person name="Fei Z."/>
            <person name="Mane S.P."/>
            <person name="Evans C."/>
            <person name="Martino-Catt S."/>
            <person name="Bricker B."/>
            <person name="Yu G."/>
            <person name="Du L."/>
            <person name="Sobral B.W."/>
        </authorList>
    </citation>
    <scope>NUCLEOTIDE SEQUENCE [LARGE SCALE GENOMIC DNA]</scope>
    <source>
        <strain>S19</strain>
    </source>
</reference>
<accession>B2S9I5</accession>
<name>Y3350_BRUA1</name>